<gene>
    <name type="ordered locus">AZC_4471</name>
</gene>
<accession>A8HYK3</accession>
<evidence type="ECO:0000255" key="1">
    <source>
        <dbReference type="HAMAP-Rule" id="MF_00048"/>
    </source>
</evidence>
<organism>
    <name type="scientific">Azorhizobium caulinodans (strain ATCC 43989 / DSM 5975 / JCM 20966 / LMG 6465 / NBRC 14845 / NCIMB 13405 / ORS 571)</name>
    <dbReference type="NCBI Taxonomy" id="438753"/>
    <lineage>
        <taxon>Bacteria</taxon>
        <taxon>Pseudomonadati</taxon>
        <taxon>Pseudomonadota</taxon>
        <taxon>Alphaproteobacteria</taxon>
        <taxon>Hyphomicrobiales</taxon>
        <taxon>Xanthobacteraceae</taxon>
        <taxon>Azorhizobium</taxon>
    </lineage>
</organism>
<protein>
    <recommendedName>
        <fullName evidence="1">UPF0102 protein AZC_4471</fullName>
    </recommendedName>
</protein>
<proteinExistence type="inferred from homology"/>
<dbReference type="EMBL" id="AP009384">
    <property type="protein sequence ID" value="BAF90469.1"/>
    <property type="molecule type" value="Genomic_DNA"/>
</dbReference>
<dbReference type="RefSeq" id="WP_012172990.1">
    <property type="nucleotide sequence ID" value="NC_009937.1"/>
</dbReference>
<dbReference type="SMR" id="A8HYK3"/>
<dbReference type="STRING" id="438753.AZC_4471"/>
<dbReference type="KEGG" id="azc:AZC_4471"/>
<dbReference type="eggNOG" id="COG0792">
    <property type="taxonomic scope" value="Bacteria"/>
</dbReference>
<dbReference type="HOGENOM" id="CLU_115353_0_2_5"/>
<dbReference type="Proteomes" id="UP000000270">
    <property type="component" value="Chromosome"/>
</dbReference>
<dbReference type="GO" id="GO:0003676">
    <property type="term" value="F:nucleic acid binding"/>
    <property type="evidence" value="ECO:0007669"/>
    <property type="project" value="InterPro"/>
</dbReference>
<dbReference type="Gene3D" id="3.40.1350.10">
    <property type="match status" value="1"/>
</dbReference>
<dbReference type="HAMAP" id="MF_00048">
    <property type="entry name" value="UPF0102"/>
    <property type="match status" value="1"/>
</dbReference>
<dbReference type="InterPro" id="IPR011335">
    <property type="entry name" value="Restrct_endonuc-II-like"/>
</dbReference>
<dbReference type="InterPro" id="IPR011856">
    <property type="entry name" value="tRNA_endonuc-like_dom_sf"/>
</dbReference>
<dbReference type="InterPro" id="IPR003509">
    <property type="entry name" value="UPF0102_YraN-like"/>
</dbReference>
<dbReference type="NCBIfam" id="NF009151">
    <property type="entry name" value="PRK12497.1-5"/>
    <property type="match status" value="1"/>
</dbReference>
<dbReference type="PANTHER" id="PTHR34039">
    <property type="entry name" value="UPF0102 PROTEIN YRAN"/>
    <property type="match status" value="1"/>
</dbReference>
<dbReference type="PANTHER" id="PTHR34039:SF1">
    <property type="entry name" value="UPF0102 PROTEIN YRAN"/>
    <property type="match status" value="1"/>
</dbReference>
<dbReference type="Pfam" id="PF02021">
    <property type="entry name" value="UPF0102"/>
    <property type="match status" value="1"/>
</dbReference>
<dbReference type="SUPFAM" id="SSF52980">
    <property type="entry name" value="Restriction endonuclease-like"/>
    <property type="match status" value="1"/>
</dbReference>
<reference key="1">
    <citation type="submission" date="2007-04" db="EMBL/GenBank/DDBJ databases">
        <title>Complete genome sequence of the nitrogen-fixing bacterium Azorhizobium caulinodans ORS571.</title>
        <authorList>
            <person name="Lee K.B."/>
            <person name="Backer P.D."/>
            <person name="Aono T."/>
            <person name="Liu C.T."/>
            <person name="Suzuki S."/>
            <person name="Suzuki T."/>
            <person name="Kaneko T."/>
            <person name="Yamada M."/>
            <person name="Tabata S."/>
            <person name="Kupfer D.M."/>
            <person name="Najar F.Z."/>
            <person name="Wiley G.B."/>
            <person name="Roe B."/>
            <person name="Binnewies T."/>
            <person name="Ussery D."/>
            <person name="Vereecke D."/>
            <person name="Gevers D."/>
            <person name="Holsters M."/>
            <person name="Oyaizu H."/>
        </authorList>
    </citation>
    <scope>NUCLEOTIDE SEQUENCE [LARGE SCALE GENOMIC DNA]</scope>
    <source>
        <strain>ATCC 43989 / DSM 5975 / JCM 20966 / LMG 6465 / NBRC 14845 / NCIMB 13405 / ORS 571</strain>
    </source>
</reference>
<comment type="similarity">
    <text evidence="1">Belongs to the UPF0102 family.</text>
</comment>
<sequence length="131" mass="14484">MARPPPPDTPARRRKQAAHARGLAAEDRAAAVLEAQSFRILARRLRTSAGELDLVARRDDLLVFCEVKLRRSLAEAAESLQLRQRRRIIAAAELFLADHPELAPLAMRFDAILLGRDGGAEHLEGAFELEG</sequence>
<name>Y4471_AZOC5</name>
<feature type="chain" id="PRO_0000336125" description="UPF0102 protein AZC_4471">
    <location>
        <begin position="1"/>
        <end position="131"/>
    </location>
</feature>
<keyword id="KW-1185">Reference proteome</keyword>